<accession>A6QWZ2</accession>
<proteinExistence type="inferred from homology"/>
<gene>
    <name type="primary">VPS10</name>
    <name type="ORF">HCAG_01899</name>
</gene>
<name>VPS10_AJECN</name>
<sequence length="1477" mass="165599">MILRRLLLAGSLLLATSFTSAKKADGPKISATKFKDEPVNLFYFDDSDTVMFQDGKNGDVYVSRDAGANWDIVDGGTHWVTEDQAKSWREFTVDAELSRYEYPLVFHGKDSNRVMLLGHKCKGLDCKERTYYTTDGFKTVHLLMENGRHCAWAVSTPTFGEGLDLPKEVNDRIFCVVSGLHSSWAEANRLLYSDRFFKDEQGTEVPLDNGRAVSGVIRTASVQKYILAATKSARTNELALFVTDDASTWHRTEFDGHRVEEDAYTILESTSYSLQVDVVSTYSSTIGTLFTSNSNGTYFTRNIKHTNRNLYGFVDFEKISSIQGIILVNTVKNWEDVEKSNGVQKKVISKISFDDGRTFQPLKVGKHDLHLHSVTDATNSGRVFSSPAPGLVMGVGNTGGHLKDYLDGDLFVSDDAGINWRKALDDAHKYEFGDQGSVIVAVFDEGRTDKISYSLDHGKNWHKASLPDGVQIRAKVLTTAPGSTTLKFLLLGSAKADIGMEYYIISIDFAEMEERTCEEKDFENWPARLNEKNEPDCLMGHKQFYRRRKAQADCFIKKKFEEPAPEFERCKCTEEDFECDFNFVRGEDGKSCIPSRSLIAPEGVCKNPDDKFIGSSGFRLIPGNVCIREGGVDLDKQTERVCSETFKNPPAGQIVVEKSFFTADYYKDYFYLERKESSKGEDETVIMITSEQHIFLSRDHGKKWKRILEEEKITRIEPHRFFDDVAYFLTNNGDGWYTLDRGDTFRKFKAPLPPNQDKLPVLSFHPDRRDWLIWTGADECNGNGGNCHSVAYYTTNLGGEWHFLMRYVRRCEFISRDARGSSDKLVFCEQFENENPSNKHLQLLSTEDWFAEKRLHYSNILDFATMQEFIIVAIRGENPQDSLRIGVSIDGKTFADAELPANVQIPIQRAYTVLESRTHAAFLLVTINNMEDHEYGSILKSNSNGTSYVLSLSAVNRNSRGYADFEKMQGLEGVAMANVVGNVADVENGAAKKFRTMITHNDGAEWTLVRPPDKDSEGRSYACSTKGGKPTDACALHLHSYTERADPRDTYSSPSAVGIMIGTGNVGDYLSLKSKADTFITRDAGITWEEVKKGKYQWEFGDSGSIIVLVTESTPTKTLLYSLDEGRSWKDFEFSEVEMQIQDISTVPSDTSRNFLLWGKEVGQGKKPGLATVNIDFSGLKERSKHIPFNLMDASSVTEPNITANGPTRIAITAENYSTWTPLGISANAHDRIMNGNKTDLLICSDYNYEPQSDGSCARVAGLEPLDPKLVCTENPKAIEWYEPTGYRRIPLTKCQGGKQLNHIVAHPCPNKEEEFFKKHPRLRGIGLFFVILIPICLAATSGYYVYNHWDGKFGRIRLGETGSGGLFDRDSLLVSIPVSMVAGVVAVITALPLLVSSLWRSVSGYVRVPGGASSRRPYSSRDSFAARRNDYTGVVEDEDELLGTDDFDDDEEGDERNGQMKNNGHVNEAITIVFLF</sequence>
<feature type="signal peptide" evidence="2">
    <location>
        <begin position="1"/>
        <end position="21"/>
    </location>
</feature>
<feature type="chain" id="PRO_0000407496" description="Vacuolar protein sorting/targeting protein 10">
    <location>
        <begin position="22"/>
        <end position="1477"/>
    </location>
</feature>
<feature type="topological domain" description="Lumenal" evidence="2">
    <location>
        <begin position="22"/>
        <end position="1325"/>
    </location>
</feature>
<feature type="transmembrane region" description="Helical" evidence="2">
    <location>
        <begin position="1326"/>
        <end position="1346"/>
    </location>
</feature>
<feature type="topological domain" description="Cytoplasmic" evidence="2">
    <location>
        <begin position="1347"/>
        <end position="1372"/>
    </location>
</feature>
<feature type="transmembrane region" description="Helical" evidence="2">
    <location>
        <begin position="1373"/>
        <end position="1393"/>
    </location>
</feature>
<feature type="topological domain" description="Lumenal" evidence="2">
    <location>
        <begin position="1394"/>
        <end position="1477"/>
    </location>
</feature>
<feature type="repeat" description="BNR 1">
    <location>
        <begin position="61"/>
        <end position="71"/>
    </location>
</feature>
<feature type="repeat" description="BNR 2">
    <location>
        <begin position="351"/>
        <end position="360"/>
    </location>
</feature>
<feature type="repeat" description="BNR 3">
    <location>
        <begin position="411"/>
        <end position="421"/>
    </location>
</feature>
<feature type="repeat" description="BNR 4">
    <location>
        <begin position="453"/>
        <end position="463"/>
    </location>
</feature>
<feature type="repeat" description="BNR 5">
    <location>
        <begin position="695"/>
        <end position="705"/>
    </location>
</feature>
<feature type="repeat" description="BNR 6">
    <location>
        <begin position="1079"/>
        <end position="1089"/>
    </location>
</feature>
<feature type="repeat" description="BNR 7">
    <location>
        <begin position="1121"/>
        <end position="1130"/>
    </location>
</feature>
<feature type="region of interest" description="Disordered" evidence="3">
    <location>
        <begin position="1443"/>
        <end position="1463"/>
    </location>
</feature>
<feature type="compositionally biased region" description="Acidic residues" evidence="3">
    <location>
        <begin position="1443"/>
        <end position="1455"/>
    </location>
</feature>
<feature type="glycosylation site" description="N-linked (GlcNAc...) asparagine" evidence="2">
    <location>
        <position position="295"/>
    </location>
</feature>
<feature type="glycosylation site" description="N-linked (GlcNAc...) asparagine" evidence="2">
    <location>
        <position position="944"/>
    </location>
</feature>
<feature type="glycosylation site" description="N-linked (GlcNAc...) asparagine" evidence="2">
    <location>
        <position position="1201"/>
    </location>
</feature>
<feature type="glycosylation site" description="N-linked (GlcNAc...) asparagine" evidence="2">
    <location>
        <position position="1216"/>
    </location>
</feature>
<feature type="glycosylation site" description="N-linked (GlcNAc...) asparagine" evidence="2">
    <location>
        <position position="1237"/>
    </location>
</feature>
<keyword id="KW-0325">Glycoprotein</keyword>
<keyword id="KW-0333">Golgi apparatus</keyword>
<keyword id="KW-0472">Membrane</keyword>
<keyword id="KW-0653">Protein transport</keyword>
<keyword id="KW-0675">Receptor</keyword>
<keyword id="KW-1185">Reference proteome</keyword>
<keyword id="KW-0677">Repeat</keyword>
<keyword id="KW-0732">Signal</keyword>
<keyword id="KW-0812">Transmembrane</keyword>
<keyword id="KW-1133">Transmembrane helix</keyword>
<keyword id="KW-0813">Transport</keyword>
<reference key="1">
    <citation type="journal article" date="2009" name="Genome Res.">
        <title>Comparative genomic analyses of the human fungal pathogens Coccidioides and their relatives.</title>
        <authorList>
            <person name="Sharpton T.J."/>
            <person name="Stajich J.E."/>
            <person name="Rounsley S.D."/>
            <person name="Gardner M.J."/>
            <person name="Wortman J.R."/>
            <person name="Jordar V.S."/>
            <person name="Maiti R."/>
            <person name="Kodira C.D."/>
            <person name="Neafsey D.E."/>
            <person name="Zeng Q."/>
            <person name="Hung C.-Y."/>
            <person name="McMahan C."/>
            <person name="Muszewska A."/>
            <person name="Grynberg M."/>
            <person name="Mandel M.A."/>
            <person name="Kellner E.M."/>
            <person name="Barker B.M."/>
            <person name="Galgiani J.N."/>
            <person name="Orbach M.J."/>
            <person name="Kirkland T.N."/>
            <person name="Cole G.T."/>
            <person name="Henn M.R."/>
            <person name="Birren B.W."/>
            <person name="Taylor J.W."/>
        </authorList>
    </citation>
    <scope>NUCLEOTIDE SEQUENCE [LARGE SCALE GENOMIC DNA]</scope>
    <source>
        <strain>NAm1 / WU24</strain>
    </source>
</reference>
<protein>
    <recommendedName>
        <fullName>Vacuolar protein sorting/targeting protein 10</fullName>
    </recommendedName>
    <alternativeName>
        <fullName>Carboxypeptidase Y receptor</fullName>
        <shortName>CPY receptor</shortName>
    </alternativeName>
    <alternativeName>
        <fullName>Sortilin VPS10</fullName>
    </alternativeName>
    <alternativeName>
        <fullName>Vacuolar carboxypeptidase sorting receptor VPS10</fullName>
    </alternativeName>
</protein>
<organism>
    <name type="scientific">Ajellomyces capsulatus (strain NAm1 / WU24)</name>
    <name type="common">Darling's disease fungus</name>
    <name type="synonym">Histoplasma capsulatum</name>
    <dbReference type="NCBI Taxonomy" id="2059318"/>
    <lineage>
        <taxon>Eukaryota</taxon>
        <taxon>Fungi</taxon>
        <taxon>Dikarya</taxon>
        <taxon>Ascomycota</taxon>
        <taxon>Pezizomycotina</taxon>
        <taxon>Eurotiomycetes</taxon>
        <taxon>Eurotiomycetidae</taxon>
        <taxon>Onygenales</taxon>
        <taxon>Ajellomycetaceae</taxon>
        <taxon>Histoplasma</taxon>
    </lineage>
</organism>
<comment type="function">
    <text evidence="1">Functions as a sorting receptor in the Golgi compartment required for the intracellular sorting and delivery of soluble vacuolar proteins, like carboxypeptidase Y (CPY) and proteinase A. Executes multiple rounds of sorting by cycling between the late Golgi and a prevacuolar endosome-like compartment (By similarity).</text>
</comment>
<comment type="subcellular location">
    <subcellularLocation>
        <location evidence="1">Golgi apparatus</location>
        <location evidence="1">trans-Golgi network membrane</location>
        <topology evidence="1">Multi-pass membrane protein</topology>
    </subcellularLocation>
    <subcellularLocation>
        <location evidence="1">Prevacuolar compartment membrane</location>
        <topology evidence="1">Multi-pass membrane protein</topology>
    </subcellularLocation>
    <text evidence="1">Cycles between the Golgi apparatus and the prevacuolar compartment.</text>
</comment>
<comment type="similarity">
    <text evidence="4">Belongs to the VPS10 family.</text>
</comment>
<dbReference type="EMBL" id="CH476655">
    <property type="protein sequence ID" value="EDN04034.1"/>
    <property type="molecule type" value="Genomic_DNA"/>
</dbReference>
<dbReference type="SMR" id="A6QWZ2"/>
<dbReference type="STRING" id="339724.A6QWZ2"/>
<dbReference type="GlyCosmos" id="A6QWZ2">
    <property type="glycosylation" value="5 sites, No reported glycans"/>
</dbReference>
<dbReference type="KEGG" id="aje:HCAG_01899"/>
<dbReference type="VEuPathDB" id="FungiDB:HCAG_01899"/>
<dbReference type="HOGENOM" id="CLU_000700_0_0_1"/>
<dbReference type="OMA" id="ATMSEFI"/>
<dbReference type="OrthoDB" id="2934at299071"/>
<dbReference type="Proteomes" id="UP000009297">
    <property type="component" value="Unassembled WGS sequence"/>
</dbReference>
<dbReference type="GO" id="GO:0005829">
    <property type="term" value="C:cytosol"/>
    <property type="evidence" value="ECO:0007669"/>
    <property type="project" value="GOC"/>
</dbReference>
<dbReference type="GO" id="GO:0005794">
    <property type="term" value="C:Golgi apparatus"/>
    <property type="evidence" value="ECO:0007669"/>
    <property type="project" value="UniProtKB-SubCell"/>
</dbReference>
<dbReference type="GO" id="GO:0016020">
    <property type="term" value="C:membrane"/>
    <property type="evidence" value="ECO:0007669"/>
    <property type="project" value="UniProtKB-KW"/>
</dbReference>
<dbReference type="GO" id="GO:0006895">
    <property type="term" value="P:Golgi to endosome transport"/>
    <property type="evidence" value="ECO:0007669"/>
    <property type="project" value="TreeGrafter"/>
</dbReference>
<dbReference type="GO" id="GO:0006896">
    <property type="term" value="P:Golgi to vacuole transport"/>
    <property type="evidence" value="ECO:0007669"/>
    <property type="project" value="TreeGrafter"/>
</dbReference>
<dbReference type="GO" id="GO:0006623">
    <property type="term" value="P:protein targeting to vacuole"/>
    <property type="evidence" value="ECO:0007669"/>
    <property type="project" value="TreeGrafter"/>
</dbReference>
<dbReference type="CDD" id="cd15482">
    <property type="entry name" value="Sialidase_non-viral"/>
    <property type="match status" value="1"/>
</dbReference>
<dbReference type="FunFam" id="3.30.60.270:FF:000005">
    <property type="entry name" value="Sortilin"/>
    <property type="match status" value="2"/>
</dbReference>
<dbReference type="FunFam" id="2.10.70.80:FF:000001">
    <property type="entry name" value="Sortilin-related VPS10 domain-containing receptor 1"/>
    <property type="match status" value="1"/>
</dbReference>
<dbReference type="Gene3D" id="2.10.70.80">
    <property type="match status" value="1"/>
</dbReference>
<dbReference type="Gene3D" id="3.30.60.270">
    <property type="match status" value="2"/>
</dbReference>
<dbReference type="Gene3D" id="2.130.10.10">
    <property type="entry name" value="YVTN repeat-like/Quinoprotein amine dehydrogenase"/>
    <property type="match status" value="1"/>
</dbReference>
<dbReference type="InterPro" id="IPR031777">
    <property type="entry name" value="Sortilin_C"/>
</dbReference>
<dbReference type="InterPro" id="IPR031778">
    <property type="entry name" value="Sortilin_N"/>
</dbReference>
<dbReference type="InterPro" id="IPR006581">
    <property type="entry name" value="VPS10"/>
</dbReference>
<dbReference type="InterPro" id="IPR050310">
    <property type="entry name" value="VPS10-sortilin"/>
</dbReference>
<dbReference type="InterPro" id="IPR015943">
    <property type="entry name" value="WD40/YVTN_repeat-like_dom_sf"/>
</dbReference>
<dbReference type="PANTHER" id="PTHR12106">
    <property type="entry name" value="SORTILIN RELATED"/>
    <property type="match status" value="1"/>
</dbReference>
<dbReference type="PANTHER" id="PTHR12106:SF27">
    <property type="entry name" value="SORTILIN-RELATED RECEPTOR"/>
    <property type="match status" value="1"/>
</dbReference>
<dbReference type="Pfam" id="PF15902">
    <property type="entry name" value="Sortilin-Vps10"/>
    <property type="match status" value="2"/>
</dbReference>
<dbReference type="Pfam" id="PF15901">
    <property type="entry name" value="Sortilin_C"/>
    <property type="match status" value="2"/>
</dbReference>
<dbReference type="SMART" id="SM00602">
    <property type="entry name" value="VPS10"/>
    <property type="match status" value="2"/>
</dbReference>
<dbReference type="SUPFAM" id="SSF110296">
    <property type="entry name" value="Oligoxyloglucan reducing end-specific cellobiohydrolase"/>
    <property type="match status" value="2"/>
</dbReference>
<evidence type="ECO:0000250" key="1"/>
<evidence type="ECO:0000255" key="2"/>
<evidence type="ECO:0000256" key="3">
    <source>
        <dbReference type="SAM" id="MobiDB-lite"/>
    </source>
</evidence>
<evidence type="ECO:0000305" key="4"/>